<protein>
    <recommendedName>
        <fullName evidence="1">8-amino-7-oxononanoate synthase</fullName>
        <shortName evidence="1">AONS</shortName>
        <ecNumber evidence="1">2.3.1.47</ecNumber>
    </recommendedName>
    <alternativeName>
        <fullName evidence="1">7-keto-8-amino-pelargonic acid synthase</fullName>
        <shortName evidence="1">7-KAP synthase</shortName>
        <shortName evidence="1">KAPA synthase</shortName>
    </alternativeName>
    <alternativeName>
        <fullName evidence="1">8-amino-7-ketopelargonate synthase</fullName>
    </alternativeName>
</protein>
<proteinExistence type="inferred from homology"/>
<reference key="1">
    <citation type="journal article" date="2005" name="Nucleic Acids Res.">
        <title>The genome sequence of Salmonella enterica serovar Choleraesuis, a highly invasive and resistant zoonotic pathogen.</title>
        <authorList>
            <person name="Chiu C.-H."/>
            <person name="Tang P."/>
            <person name="Chu C."/>
            <person name="Hu S."/>
            <person name="Bao Q."/>
            <person name="Yu J."/>
            <person name="Chou Y.-Y."/>
            <person name="Wang H.-S."/>
            <person name="Lee Y.-S."/>
        </authorList>
    </citation>
    <scope>NUCLEOTIDE SEQUENCE [LARGE SCALE GENOMIC DNA]</scope>
    <source>
        <strain>SC-B67</strain>
    </source>
</reference>
<gene>
    <name evidence="1" type="primary">bioF</name>
    <name type="ordered locus">SCH_0793</name>
</gene>
<dbReference type="EC" id="2.3.1.47" evidence="1"/>
<dbReference type="EMBL" id="AE017220">
    <property type="protein sequence ID" value="AAX64699.1"/>
    <property type="molecule type" value="Genomic_DNA"/>
</dbReference>
<dbReference type="RefSeq" id="WP_000118950.1">
    <property type="nucleotide sequence ID" value="NC_006905.1"/>
</dbReference>
<dbReference type="SMR" id="Q57RG2"/>
<dbReference type="KEGG" id="sec:SCH_0793"/>
<dbReference type="HOGENOM" id="CLU_015846_11_2_6"/>
<dbReference type="UniPathway" id="UPA00078"/>
<dbReference type="Proteomes" id="UP000000538">
    <property type="component" value="Chromosome"/>
</dbReference>
<dbReference type="GO" id="GO:0008710">
    <property type="term" value="F:8-amino-7-oxononanoate synthase activity"/>
    <property type="evidence" value="ECO:0007669"/>
    <property type="project" value="UniProtKB-UniRule"/>
</dbReference>
<dbReference type="GO" id="GO:0030170">
    <property type="term" value="F:pyridoxal phosphate binding"/>
    <property type="evidence" value="ECO:0007669"/>
    <property type="project" value="UniProtKB-UniRule"/>
</dbReference>
<dbReference type="GO" id="GO:0009102">
    <property type="term" value="P:biotin biosynthetic process"/>
    <property type="evidence" value="ECO:0007669"/>
    <property type="project" value="UniProtKB-UniRule"/>
</dbReference>
<dbReference type="CDD" id="cd06454">
    <property type="entry name" value="KBL_like"/>
    <property type="match status" value="1"/>
</dbReference>
<dbReference type="FunFam" id="3.40.640.10:FF:000095">
    <property type="entry name" value="8-amino-7-oxononanoate synthase"/>
    <property type="match status" value="1"/>
</dbReference>
<dbReference type="Gene3D" id="3.90.1150.10">
    <property type="entry name" value="Aspartate Aminotransferase, domain 1"/>
    <property type="match status" value="1"/>
</dbReference>
<dbReference type="Gene3D" id="3.40.640.10">
    <property type="entry name" value="Type I PLP-dependent aspartate aminotransferase-like (Major domain)"/>
    <property type="match status" value="1"/>
</dbReference>
<dbReference type="HAMAP" id="MF_01693">
    <property type="entry name" value="BioF_aminotrans_2"/>
    <property type="match status" value="1"/>
</dbReference>
<dbReference type="InterPro" id="IPR001917">
    <property type="entry name" value="Aminotrans_II_pyridoxalP_BS"/>
</dbReference>
<dbReference type="InterPro" id="IPR004839">
    <property type="entry name" value="Aminotransferase_I/II_large"/>
</dbReference>
<dbReference type="InterPro" id="IPR050087">
    <property type="entry name" value="AON_synthase_class-II"/>
</dbReference>
<dbReference type="InterPro" id="IPR004723">
    <property type="entry name" value="AONS_Archaea/Proteobacteria"/>
</dbReference>
<dbReference type="InterPro" id="IPR022834">
    <property type="entry name" value="AONS_Proteobacteria"/>
</dbReference>
<dbReference type="InterPro" id="IPR015424">
    <property type="entry name" value="PyrdxlP-dep_Trfase"/>
</dbReference>
<dbReference type="InterPro" id="IPR015421">
    <property type="entry name" value="PyrdxlP-dep_Trfase_major"/>
</dbReference>
<dbReference type="InterPro" id="IPR015422">
    <property type="entry name" value="PyrdxlP-dep_Trfase_small"/>
</dbReference>
<dbReference type="NCBIfam" id="TIGR00858">
    <property type="entry name" value="bioF"/>
    <property type="match status" value="1"/>
</dbReference>
<dbReference type="PANTHER" id="PTHR13693:SF100">
    <property type="entry name" value="8-AMINO-7-OXONONANOATE SYNTHASE"/>
    <property type="match status" value="1"/>
</dbReference>
<dbReference type="PANTHER" id="PTHR13693">
    <property type="entry name" value="CLASS II AMINOTRANSFERASE/8-AMINO-7-OXONONANOATE SYNTHASE"/>
    <property type="match status" value="1"/>
</dbReference>
<dbReference type="Pfam" id="PF00155">
    <property type="entry name" value="Aminotran_1_2"/>
    <property type="match status" value="1"/>
</dbReference>
<dbReference type="SUPFAM" id="SSF53383">
    <property type="entry name" value="PLP-dependent transferases"/>
    <property type="match status" value="1"/>
</dbReference>
<dbReference type="PROSITE" id="PS00599">
    <property type="entry name" value="AA_TRANSFER_CLASS_2"/>
    <property type="match status" value="1"/>
</dbReference>
<sequence length="385" mass="42070">MSWQQRVDDALTARRATDTLRRRYVVSQGAGRWLVANGRQYLNFSSNDYLGLSQHPQIIRAWQQAATRFGVGSGGSGHISGYSVAHRALEEELAQWLGYPRALLFISGFAANQAVITALMKKNDRIVADRLSHASLLEAANLSPAQLRRFIHNDTQHLSRLLQSPCVGQQLVVTEGVYSMDGDSAPLAEIQHIARRHHAWLLVDDAHGIGVTGDEGRGTCWQRGVKPELLVVTFGKGFGVSGAAVLCSESVADYLLQFARHLVYSTSMPPAQAQALSASLAVIRSDEGRERREKLAALVQRFRAGVNASRFTLLNAHSAIQPLIVGDNSRALRLAEALRQQGCWATAIRPPTVPVGTARLRLTLTQAHEACDIDRLLEVLHGAGE</sequence>
<comment type="function">
    <text evidence="1">Catalyzes the decarboxylative condensation of pimeloyl-[acyl-carrier protein] and L-alanine to produce 8-amino-7-oxononanoate (AON), [acyl-carrier protein], and carbon dioxide.</text>
</comment>
<comment type="catalytic activity">
    <reaction evidence="1">
        <text>6-carboxyhexanoyl-[ACP] + L-alanine + H(+) = (8S)-8-amino-7-oxononanoate + holo-[ACP] + CO2</text>
        <dbReference type="Rhea" id="RHEA:42288"/>
        <dbReference type="Rhea" id="RHEA-COMP:9685"/>
        <dbReference type="Rhea" id="RHEA-COMP:9955"/>
        <dbReference type="ChEBI" id="CHEBI:15378"/>
        <dbReference type="ChEBI" id="CHEBI:16526"/>
        <dbReference type="ChEBI" id="CHEBI:57972"/>
        <dbReference type="ChEBI" id="CHEBI:64479"/>
        <dbReference type="ChEBI" id="CHEBI:78846"/>
        <dbReference type="ChEBI" id="CHEBI:149468"/>
        <dbReference type="EC" id="2.3.1.47"/>
    </reaction>
</comment>
<comment type="cofactor">
    <cofactor evidence="1">
        <name>pyridoxal 5'-phosphate</name>
        <dbReference type="ChEBI" id="CHEBI:597326"/>
    </cofactor>
</comment>
<comment type="pathway">
    <text evidence="1">Cofactor biosynthesis; biotin biosynthesis.</text>
</comment>
<comment type="subunit">
    <text evidence="1">Homodimer.</text>
</comment>
<comment type="similarity">
    <text evidence="1">Belongs to the class-II pyridoxal-phosphate-dependent aminotransferase family. BioF subfamily.</text>
</comment>
<feature type="chain" id="PRO_0000381094" description="8-amino-7-oxononanoate synthase">
    <location>
        <begin position="1"/>
        <end position="385"/>
    </location>
</feature>
<feature type="binding site" evidence="1">
    <location>
        <position position="21"/>
    </location>
    <ligand>
        <name>substrate</name>
    </ligand>
</feature>
<feature type="binding site" evidence="1">
    <location>
        <begin position="108"/>
        <end position="109"/>
    </location>
    <ligand>
        <name>pyridoxal 5'-phosphate</name>
        <dbReference type="ChEBI" id="CHEBI:597326"/>
    </ligand>
</feature>
<feature type="binding site" evidence="1">
    <location>
        <position position="133"/>
    </location>
    <ligand>
        <name>substrate</name>
    </ligand>
</feature>
<feature type="binding site" evidence="1">
    <location>
        <position position="179"/>
    </location>
    <ligand>
        <name>pyridoxal 5'-phosphate</name>
        <dbReference type="ChEBI" id="CHEBI:597326"/>
    </ligand>
</feature>
<feature type="binding site" evidence="1">
    <location>
        <position position="207"/>
    </location>
    <ligand>
        <name>pyridoxal 5'-phosphate</name>
        <dbReference type="ChEBI" id="CHEBI:597326"/>
    </ligand>
</feature>
<feature type="binding site" evidence="1">
    <location>
        <position position="233"/>
    </location>
    <ligand>
        <name>pyridoxal 5'-phosphate</name>
        <dbReference type="ChEBI" id="CHEBI:597326"/>
    </ligand>
</feature>
<feature type="binding site" evidence="1">
    <location>
        <position position="352"/>
    </location>
    <ligand>
        <name>substrate</name>
    </ligand>
</feature>
<feature type="modified residue" description="N6-(pyridoxal phosphate)lysine" evidence="1">
    <location>
        <position position="236"/>
    </location>
</feature>
<accession>Q57RG2</accession>
<organism>
    <name type="scientific">Salmonella choleraesuis (strain SC-B67)</name>
    <dbReference type="NCBI Taxonomy" id="321314"/>
    <lineage>
        <taxon>Bacteria</taxon>
        <taxon>Pseudomonadati</taxon>
        <taxon>Pseudomonadota</taxon>
        <taxon>Gammaproteobacteria</taxon>
        <taxon>Enterobacterales</taxon>
        <taxon>Enterobacteriaceae</taxon>
        <taxon>Salmonella</taxon>
    </lineage>
</organism>
<name>BIOF_SALCH</name>
<evidence type="ECO:0000255" key="1">
    <source>
        <dbReference type="HAMAP-Rule" id="MF_01693"/>
    </source>
</evidence>
<keyword id="KW-0093">Biotin biosynthesis</keyword>
<keyword id="KW-0663">Pyridoxal phosphate</keyword>
<keyword id="KW-0808">Transferase</keyword>